<accession>P0ADE0</accession>
<accession>P39412</accession>
<name>YJJY_ECO57</name>
<dbReference type="EMBL" id="AE005174">
    <property type="protein sequence ID" value="AAG59582.1"/>
    <property type="molecule type" value="Genomic_DNA"/>
</dbReference>
<dbReference type="EMBL" id="BA000007">
    <property type="protein sequence ID" value="BAB38783.1"/>
    <property type="molecule type" value="Genomic_DNA"/>
</dbReference>
<dbReference type="PIR" id="B86140">
    <property type="entry name" value="B86140"/>
</dbReference>
<dbReference type="PIR" id="H91298">
    <property type="entry name" value="H91298"/>
</dbReference>
<dbReference type="RefSeq" id="NP_313387.1">
    <property type="nucleotide sequence ID" value="NC_002695.1"/>
</dbReference>
<dbReference type="RefSeq" id="WP_001303782.1">
    <property type="nucleotide sequence ID" value="NZ_VOAI01000002.1"/>
</dbReference>
<dbReference type="GeneID" id="97600243"/>
<dbReference type="KEGG" id="ece:Z6005"/>
<dbReference type="PATRIC" id="fig|83334.175.peg.134"/>
<dbReference type="HOGENOM" id="CLU_3184814_0_0_6"/>
<dbReference type="Proteomes" id="UP000000558">
    <property type="component" value="Chromosome"/>
</dbReference>
<dbReference type="Proteomes" id="UP000002519">
    <property type="component" value="Chromosome"/>
</dbReference>
<keyword id="KW-1185">Reference proteome</keyword>
<sequence>MTKVRNCVLDALSINVNNIISLVVGTFPQDPTVSKTAVILTILTAT</sequence>
<protein>
    <recommendedName>
        <fullName>Uncharacterized protein YjjY</fullName>
    </recommendedName>
</protein>
<organism>
    <name type="scientific">Escherichia coli O157:H7</name>
    <dbReference type="NCBI Taxonomy" id="83334"/>
    <lineage>
        <taxon>Bacteria</taxon>
        <taxon>Pseudomonadati</taxon>
        <taxon>Pseudomonadota</taxon>
        <taxon>Gammaproteobacteria</taxon>
        <taxon>Enterobacterales</taxon>
        <taxon>Enterobacteriaceae</taxon>
        <taxon>Escherichia</taxon>
    </lineage>
</organism>
<gene>
    <name type="primary">yjjY</name>
    <name type="ordered locus">Z6005</name>
    <name type="ordered locus">ECs5360</name>
</gene>
<reference key="1">
    <citation type="journal article" date="2001" name="Nature">
        <title>Genome sequence of enterohaemorrhagic Escherichia coli O157:H7.</title>
        <authorList>
            <person name="Perna N.T."/>
            <person name="Plunkett G. III"/>
            <person name="Burland V."/>
            <person name="Mau B."/>
            <person name="Glasner J.D."/>
            <person name="Rose D.J."/>
            <person name="Mayhew G.F."/>
            <person name="Evans P.S."/>
            <person name="Gregor J."/>
            <person name="Kirkpatrick H.A."/>
            <person name="Posfai G."/>
            <person name="Hackett J."/>
            <person name="Klink S."/>
            <person name="Boutin A."/>
            <person name="Shao Y."/>
            <person name="Miller L."/>
            <person name="Grotbeck E.J."/>
            <person name="Davis N.W."/>
            <person name="Lim A."/>
            <person name="Dimalanta E.T."/>
            <person name="Potamousis K."/>
            <person name="Apodaca J."/>
            <person name="Anantharaman T.S."/>
            <person name="Lin J."/>
            <person name="Yen G."/>
            <person name="Schwartz D.C."/>
            <person name="Welch R.A."/>
            <person name="Blattner F.R."/>
        </authorList>
    </citation>
    <scope>NUCLEOTIDE SEQUENCE [LARGE SCALE GENOMIC DNA]</scope>
    <source>
        <strain>O157:H7 / EDL933 / ATCC 700927 / EHEC</strain>
    </source>
</reference>
<reference key="2">
    <citation type="journal article" date="2001" name="DNA Res.">
        <title>Complete genome sequence of enterohemorrhagic Escherichia coli O157:H7 and genomic comparison with a laboratory strain K-12.</title>
        <authorList>
            <person name="Hayashi T."/>
            <person name="Makino K."/>
            <person name="Ohnishi M."/>
            <person name="Kurokawa K."/>
            <person name="Ishii K."/>
            <person name="Yokoyama K."/>
            <person name="Han C.-G."/>
            <person name="Ohtsubo E."/>
            <person name="Nakayama K."/>
            <person name="Murata T."/>
            <person name="Tanaka M."/>
            <person name="Tobe T."/>
            <person name="Iida T."/>
            <person name="Takami H."/>
            <person name="Honda T."/>
            <person name="Sasakawa C."/>
            <person name="Ogasawara N."/>
            <person name="Yasunaga T."/>
            <person name="Kuhara S."/>
            <person name="Shiba T."/>
            <person name="Hattori M."/>
            <person name="Shinagawa H."/>
        </authorList>
    </citation>
    <scope>NUCLEOTIDE SEQUENCE [LARGE SCALE GENOMIC DNA]</scope>
    <source>
        <strain>O157:H7 / Sakai / RIMD 0509952 / EHEC</strain>
    </source>
</reference>
<feature type="chain" id="PRO_0000169818" description="Uncharacterized protein YjjY">
    <location>
        <begin position="1"/>
        <end position="46"/>
    </location>
</feature>
<proteinExistence type="predicted"/>